<organism>
    <name type="scientific">Fusobacterium nucleatum subsp. nucleatum (strain ATCC 25586 / DSM 15643 / BCRC 10681 / CIP 101130 / JCM 8532 / KCTC 2640 / LMG 13131 / VPI 4355)</name>
    <dbReference type="NCBI Taxonomy" id="190304"/>
    <lineage>
        <taxon>Bacteria</taxon>
        <taxon>Fusobacteriati</taxon>
        <taxon>Fusobacteriota</taxon>
        <taxon>Fusobacteriia</taxon>
        <taxon>Fusobacteriales</taxon>
        <taxon>Fusobacteriaceae</taxon>
        <taxon>Fusobacterium</taxon>
    </lineage>
</organism>
<feature type="chain" id="PRO_0000203986" description="UPF0246 protein FN1762">
    <location>
        <begin position="1"/>
        <end position="248"/>
    </location>
</feature>
<sequence length="248" mass="29229">MKIIFSPSKEMREENIFENKKIEFTESKFKDKTNILIKILSKKSINEIENIMKLKGELLNNTYKDIQNYDKLKYIPAISMYYGVSFKELELEDYSEKSLKYLKNNLLILSTLYGASLAFDLLKKYRLDMTMSITDKGLYNFWKKDVNDYISNILNKDEILLNLASSEFSKLIDNKKISMINIDFKEEEDGTYKSISIYSKKARGKFLNYLVKNQVSNLEEIIKIELDGYNINKDLSDEKNFIFTRKNS</sequence>
<protein>
    <recommendedName>
        <fullName evidence="1">UPF0246 protein FN1762</fullName>
    </recommendedName>
</protein>
<keyword id="KW-1185">Reference proteome</keyword>
<accession>Q8RI57</accession>
<comment type="similarity">
    <text evidence="1">Belongs to the UPF0246 family.</text>
</comment>
<dbReference type="EMBL" id="AE009951">
    <property type="protein sequence ID" value="AAL93875.1"/>
    <property type="molecule type" value="Genomic_DNA"/>
</dbReference>
<dbReference type="RefSeq" id="NP_602576.1">
    <property type="nucleotide sequence ID" value="NC_003454.1"/>
</dbReference>
<dbReference type="RefSeq" id="WP_011015818.1">
    <property type="nucleotide sequence ID" value="NZ_CP028101.1"/>
</dbReference>
<dbReference type="SMR" id="Q8RI57"/>
<dbReference type="STRING" id="190304.FN1762"/>
<dbReference type="PaxDb" id="190304-FN1762"/>
<dbReference type="EnsemblBacteria" id="AAL93875">
    <property type="protein sequence ID" value="AAL93875"/>
    <property type="gene ID" value="FN1762"/>
</dbReference>
<dbReference type="GeneID" id="79782690"/>
<dbReference type="KEGG" id="fnu:FN1762"/>
<dbReference type="PATRIC" id="fig|190304.8.peg.250"/>
<dbReference type="eggNOG" id="COG3022">
    <property type="taxonomic scope" value="Bacteria"/>
</dbReference>
<dbReference type="HOGENOM" id="CLU_061989_2_0_0"/>
<dbReference type="InParanoid" id="Q8RI57"/>
<dbReference type="BioCyc" id="FNUC190304:G1FZS-260-MONOMER"/>
<dbReference type="Proteomes" id="UP000002521">
    <property type="component" value="Chromosome"/>
</dbReference>
<dbReference type="GO" id="GO:0005829">
    <property type="term" value="C:cytosol"/>
    <property type="evidence" value="ECO:0000318"/>
    <property type="project" value="GO_Central"/>
</dbReference>
<dbReference type="GO" id="GO:0033194">
    <property type="term" value="P:response to hydroperoxide"/>
    <property type="evidence" value="ECO:0000318"/>
    <property type="project" value="GO_Central"/>
</dbReference>
<dbReference type="HAMAP" id="MF_00652">
    <property type="entry name" value="UPF0246"/>
    <property type="match status" value="1"/>
</dbReference>
<dbReference type="InterPro" id="IPR005583">
    <property type="entry name" value="YaaA"/>
</dbReference>
<dbReference type="PANTHER" id="PTHR30283:SF4">
    <property type="entry name" value="PEROXIDE STRESS RESISTANCE PROTEIN YAAA"/>
    <property type="match status" value="1"/>
</dbReference>
<dbReference type="PANTHER" id="PTHR30283">
    <property type="entry name" value="PEROXIDE STRESS RESPONSE PROTEIN YAAA"/>
    <property type="match status" value="1"/>
</dbReference>
<dbReference type="Pfam" id="PF03883">
    <property type="entry name" value="H2O2_YaaD"/>
    <property type="match status" value="1"/>
</dbReference>
<name>Y1762_FUSNN</name>
<proteinExistence type="inferred from homology"/>
<evidence type="ECO:0000255" key="1">
    <source>
        <dbReference type="HAMAP-Rule" id="MF_00652"/>
    </source>
</evidence>
<gene>
    <name type="ordered locus">FN1762</name>
</gene>
<reference key="1">
    <citation type="journal article" date="2002" name="J. Bacteriol.">
        <title>Genome sequence and analysis of the oral bacterium Fusobacterium nucleatum strain ATCC 25586.</title>
        <authorList>
            <person name="Kapatral V."/>
            <person name="Anderson I."/>
            <person name="Ivanova N."/>
            <person name="Reznik G."/>
            <person name="Los T."/>
            <person name="Lykidis A."/>
            <person name="Bhattacharyya A."/>
            <person name="Bartman A."/>
            <person name="Gardner W."/>
            <person name="Grechkin G."/>
            <person name="Zhu L."/>
            <person name="Vasieva O."/>
            <person name="Chu L."/>
            <person name="Kogan Y."/>
            <person name="Chaga O."/>
            <person name="Goltsman E."/>
            <person name="Bernal A."/>
            <person name="Larsen N."/>
            <person name="D'Souza M."/>
            <person name="Walunas T."/>
            <person name="Pusch G."/>
            <person name="Haselkorn R."/>
            <person name="Fonstein M."/>
            <person name="Kyrpides N.C."/>
            <person name="Overbeek R."/>
        </authorList>
    </citation>
    <scope>NUCLEOTIDE SEQUENCE [LARGE SCALE GENOMIC DNA]</scope>
    <source>
        <strain>ATCC 25586 / DSM 15643 / BCRC 10681 / CIP 101130 / JCM 8532 / KCTC 2640 / LMG 13131 / VPI 4355</strain>
    </source>
</reference>